<feature type="chain" id="PRO_1000011201" description="Phosphopantetheine adenylyltransferase">
    <location>
        <begin position="1"/>
        <end position="157"/>
    </location>
</feature>
<feature type="binding site" evidence="1">
    <location>
        <begin position="8"/>
        <end position="9"/>
    </location>
    <ligand>
        <name>ATP</name>
        <dbReference type="ChEBI" id="CHEBI:30616"/>
    </ligand>
</feature>
<feature type="binding site" evidence="1">
    <location>
        <position position="8"/>
    </location>
    <ligand>
        <name>substrate</name>
    </ligand>
</feature>
<feature type="binding site" evidence="1">
    <location>
        <position position="16"/>
    </location>
    <ligand>
        <name>ATP</name>
        <dbReference type="ChEBI" id="CHEBI:30616"/>
    </ligand>
</feature>
<feature type="binding site" evidence="1">
    <location>
        <position position="40"/>
    </location>
    <ligand>
        <name>substrate</name>
    </ligand>
</feature>
<feature type="binding site" evidence="1">
    <location>
        <position position="72"/>
    </location>
    <ligand>
        <name>substrate</name>
    </ligand>
</feature>
<feature type="binding site" evidence="1">
    <location>
        <position position="86"/>
    </location>
    <ligand>
        <name>substrate</name>
    </ligand>
</feature>
<feature type="binding site" evidence="1">
    <location>
        <begin position="87"/>
        <end position="89"/>
    </location>
    <ligand>
        <name>ATP</name>
        <dbReference type="ChEBI" id="CHEBI:30616"/>
    </ligand>
</feature>
<feature type="binding site" evidence="1">
    <location>
        <position position="97"/>
    </location>
    <ligand>
        <name>ATP</name>
        <dbReference type="ChEBI" id="CHEBI:30616"/>
    </ligand>
</feature>
<feature type="binding site" evidence="1">
    <location>
        <begin position="122"/>
        <end position="128"/>
    </location>
    <ligand>
        <name>ATP</name>
        <dbReference type="ChEBI" id="CHEBI:30616"/>
    </ligand>
</feature>
<feature type="site" description="Transition state stabilizer" evidence="1">
    <location>
        <position position="16"/>
    </location>
</feature>
<comment type="function">
    <text evidence="1">Reversibly transfers an adenylyl group from ATP to 4'-phosphopantetheine, yielding dephospho-CoA (dPCoA) and pyrophosphate.</text>
</comment>
<comment type="catalytic activity">
    <reaction evidence="1">
        <text>(R)-4'-phosphopantetheine + ATP + H(+) = 3'-dephospho-CoA + diphosphate</text>
        <dbReference type="Rhea" id="RHEA:19801"/>
        <dbReference type="ChEBI" id="CHEBI:15378"/>
        <dbReference type="ChEBI" id="CHEBI:30616"/>
        <dbReference type="ChEBI" id="CHEBI:33019"/>
        <dbReference type="ChEBI" id="CHEBI:57328"/>
        <dbReference type="ChEBI" id="CHEBI:61723"/>
        <dbReference type="EC" id="2.7.7.3"/>
    </reaction>
</comment>
<comment type="cofactor">
    <cofactor evidence="1">
        <name>Mg(2+)</name>
        <dbReference type="ChEBI" id="CHEBI:18420"/>
    </cofactor>
</comment>
<comment type="pathway">
    <text evidence="1">Cofactor biosynthesis; coenzyme A biosynthesis; CoA from (R)-pantothenate: step 4/5.</text>
</comment>
<comment type="subunit">
    <text evidence="1">Homohexamer.</text>
</comment>
<comment type="subcellular location">
    <subcellularLocation>
        <location evidence="1">Cytoplasm</location>
    </subcellularLocation>
</comment>
<comment type="similarity">
    <text evidence="1">Belongs to the bacterial CoaD family.</text>
</comment>
<protein>
    <recommendedName>
        <fullName evidence="1">Phosphopantetheine adenylyltransferase</fullName>
        <ecNumber evidence="1">2.7.7.3</ecNumber>
    </recommendedName>
    <alternativeName>
        <fullName evidence="1">Dephospho-CoA pyrophosphorylase</fullName>
    </alternativeName>
    <alternativeName>
        <fullName evidence="1">Pantetheine-phosphate adenylyltransferase</fullName>
        <shortName evidence="1">PPAT</shortName>
    </alternativeName>
</protein>
<name>COAD_PROM9</name>
<proteinExistence type="inferred from homology"/>
<keyword id="KW-0067">ATP-binding</keyword>
<keyword id="KW-0173">Coenzyme A biosynthesis</keyword>
<keyword id="KW-0963">Cytoplasm</keyword>
<keyword id="KW-0460">Magnesium</keyword>
<keyword id="KW-0547">Nucleotide-binding</keyword>
<keyword id="KW-0548">Nucleotidyltransferase</keyword>
<keyword id="KW-0808">Transferase</keyword>
<organism>
    <name type="scientific">Prochlorococcus marinus (strain MIT 9312)</name>
    <dbReference type="NCBI Taxonomy" id="74546"/>
    <lineage>
        <taxon>Bacteria</taxon>
        <taxon>Bacillati</taxon>
        <taxon>Cyanobacteriota</taxon>
        <taxon>Cyanophyceae</taxon>
        <taxon>Synechococcales</taxon>
        <taxon>Prochlorococcaceae</taxon>
        <taxon>Prochlorococcus</taxon>
    </lineage>
</organism>
<gene>
    <name evidence="1" type="primary">coaD</name>
    <name type="ordered locus">PMT9312_0916</name>
</gene>
<evidence type="ECO:0000255" key="1">
    <source>
        <dbReference type="HAMAP-Rule" id="MF_00151"/>
    </source>
</evidence>
<accession>Q31AW9</accession>
<sequence length="157" mass="17768">MKILYPGTFDPLTNGHLDLIERAEKIFGNLVVAVLENTSKTPTFNLERRIIQIKYSLSHLPNIEIISYSGLTVDCANDLKANLILRGLRAMSDFEYELQIAHTNKSLNNDIETIFLSTNTNYSFLSSSLVKEVAKFGGEINHMVPPSVEKDLKEYFK</sequence>
<reference key="1">
    <citation type="journal article" date="2006" name="Science">
        <title>Genomic islands and the ecology and evolution of Prochlorococcus.</title>
        <authorList>
            <person name="Coleman M.L."/>
            <person name="Sullivan M.B."/>
            <person name="Martiny A.C."/>
            <person name="Steglich C."/>
            <person name="Barry K."/>
            <person name="Delong E.F."/>
            <person name="Chisholm S.W."/>
        </authorList>
    </citation>
    <scope>NUCLEOTIDE SEQUENCE [LARGE SCALE GENOMIC DNA]</scope>
    <source>
        <strain>MIT 9312</strain>
    </source>
</reference>
<dbReference type="EC" id="2.7.7.3" evidence="1"/>
<dbReference type="EMBL" id="CP000111">
    <property type="protein sequence ID" value="ABB49976.1"/>
    <property type="molecule type" value="Genomic_DNA"/>
</dbReference>
<dbReference type="RefSeq" id="WP_011376470.1">
    <property type="nucleotide sequence ID" value="NC_007577.1"/>
</dbReference>
<dbReference type="SMR" id="Q31AW9"/>
<dbReference type="STRING" id="74546.PMT9312_0916"/>
<dbReference type="KEGG" id="pmi:PMT9312_0916"/>
<dbReference type="eggNOG" id="COG0669">
    <property type="taxonomic scope" value="Bacteria"/>
</dbReference>
<dbReference type="HOGENOM" id="CLU_100149_0_0_3"/>
<dbReference type="OrthoDB" id="9806661at2"/>
<dbReference type="UniPathway" id="UPA00241">
    <property type="reaction ID" value="UER00355"/>
</dbReference>
<dbReference type="Proteomes" id="UP000002715">
    <property type="component" value="Chromosome"/>
</dbReference>
<dbReference type="GO" id="GO:0005737">
    <property type="term" value="C:cytoplasm"/>
    <property type="evidence" value="ECO:0007669"/>
    <property type="project" value="UniProtKB-SubCell"/>
</dbReference>
<dbReference type="GO" id="GO:0005524">
    <property type="term" value="F:ATP binding"/>
    <property type="evidence" value="ECO:0007669"/>
    <property type="project" value="UniProtKB-KW"/>
</dbReference>
<dbReference type="GO" id="GO:0004595">
    <property type="term" value="F:pantetheine-phosphate adenylyltransferase activity"/>
    <property type="evidence" value="ECO:0007669"/>
    <property type="project" value="UniProtKB-UniRule"/>
</dbReference>
<dbReference type="GO" id="GO:0015937">
    <property type="term" value="P:coenzyme A biosynthetic process"/>
    <property type="evidence" value="ECO:0007669"/>
    <property type="project" value="UniProtKB-UniRule"/>
</dbReference>
<dbReference type="CDD" id="cd02163">
    <property type="entry name" value="PPAT"/>
    <property type="match status" value="1"/>
</dbReference>
<dbReference type="Gene3D" id="3.40.50.620">
    <property type="entry name" value="HUPs"/>
    <property type="match status" value="1"/>
</dbReference>
<dbReference type="HAMAP" id="MF_00151">
    <property type="entry name" value="PPAT_bact"/>
    <property type="match status" value="1"/>
</dbReference>
<dbReference type="InterPro" id="IPR004821">
    <property type="entry name" value="Cyt_trans-like"/>
</dbReference>
<dbReference type="InterPro" id="IPR001980">
    <property type="entry name" value="PPAT"/>
</dbReference>
<dbReference type="InterPro" id="IPR014729">
    <property type="entry name" value="Rossmann-like_a/b/a_fold"/>
</dbReference>
<dbReference type="NCBIfam" id="TIGR01510">
    <property type="entry name" value="coaD_prev_kdtB"/>
    <property type="match status" value="1"/>
</dbReference>
<dbReference type="NCBIfam" id="TIGR00125">
    <property type="entry name" value="cyt_tran_rel"/>
    <property type="match status" value="1"/>
</dbReference>
<dbReference type="PANTHER" id="PTHR21342">
    <property type="entry name" value="PHOSPHOPANTETHEINE ADENYLYLTRANSFERASE"/>
    <property type="match status" value="1"/>
</dbReference>
<dbReference type="PANTHER" id="PTHR21342:SF1">
    <property type="entry name" value="PHOSPHOPANTETHEINE ADENYLYLTRANSFERASE"/>
    <property type="match status" value="1"/>
</dbReference>
<dbReference type="Pfam" id="PF01467">
    <property type="entry name" value="CTP_transf_like"/>
    <property type="match status" value="1"/>
</dbReference>
<dbReference type="PRINTS" id="PR01020">
    <property type="entry name" value="LPSBIOSNTHSS"/>
</dbReference>
<dbReference type="SUPFAM" id="SSF52374">
    <property type="entry name" value="Nucleotidylyl transferase"/>
    <property type="match status" value="1"/>
</dbReference>